<comment type="function">
    <text evidence="1">Part of a membrane-bound complex that couples electron transfer with translocation of ions across the membrane. Required to maintain the reduced state of SoxR.</text>
</comment>
<comment type="subunit">
    <text evidence="1">The complex is composed of six subunits: RsxA, RsxB, RsxC, RsxD, RsxE and RsxG.</text>
</comment>
<comment type="subcellular location">
    <subcellularLocation>
        <location evidence="1">Cell inner membrane</location>
        <topology evidence="1">Multi-pass membrane protein</topology>
    </subcellularLocation>
</comment>
<comment type="similarity">
    <text evidence="1">Belongs to the NqrDE/RnfAE family.</text>
</comment>
<protein>
    <recommendedName>
        <fullName evidence="1">Ion-translocating oxidoreductase complex subunit E</fullName>
        <ecNumber evidence="1">7.-.-.-</ecNumber>
    </recommendedName>
    <alternativeName>
        <fullName evidence="1">Rsx electron transport complex subunit E</fullName>
    </alternativeName>
</protein>
<evidence type="ECO:0000255" key="1">
    <source>
        <dbReference type="HAMAP-Rule" id="MF_00478"/>
    </source>
</evidence>
<keyword id="KW-0997">Cell inner membrane</keyword>
<keyword id="KW-1003">Cell membrane</keyword>
<keyword id="KW-0249">Electron transport</keyword>
<keyword id="KW-0472">Membrane</keyword>
<keyword id="KW-1278">Translocase</keyword>
<keyword id="KW-0812">Transmembrane</keyword>
<keyword id="KW-1133">Transmembrane helix</keyword>
<keyword id="KW-0813">Transport</keyword>
<feature type="chain" id="PRO_1000125853" description="Ion-translocating oxidoreductase complex subunit E">
    <location>
        <begin position="1"/>
        <end position="231"/>
    </location>
</feature>
<feature type="transmembrane region" description="Helical" evidence="1">
    <location>
        <begin position="18"/>
        <end position="38"/>
    </location>
</feature>
<feature type="transmembrane region" description="Helical" evidence="1">
    <location>
        <begin position="39"/>
        <end position="59"/>
    </location>
</feature>
<feature type="transmembrane region" description="Helical" evidence="1">
    <location>
        <begin position="63"/>
        <end position="83"/>
    </location>
</feature>
<feature type="transmembrane region" description="Helical" evidence="1">
    <location>
        <begin position="86"/>
        <end position="106"/>
    </location>
</feature>
<feature type="transmembrane region" description="Helical" evidence="1">
    <location>
        <begin position="125"/>
        <end position="145"/>
    </location>
</feature>
<feature type="transmembrane region" description="Helical" evidence="1">
    <location>
        <begin position="182"/>
        <end position="202"/>
    </location>
</feature>
<dbReference type="EC" id="7.-.-.-" evidence="1"/>
<dbReference type="EMBL" id="CP000970">
    <property type="protein sequence ID" value="ACB16754.1"/>
    <property type="molecule type" value="Genomic_DNA"/>
</dbReference>
<dbReference type="RefSeq" id="WP_001289638.1">
    <property type="nucleotide sequence ID" value="NC_010498.1"/>
</dbReference>
<dbReference type="SMR" id="B1LEQ4"/>
<dbReference type="KEGG" id="ecm:EcSMS35_1567"/>
<dbReference type="HOGENOM" id="CLU_046659_1_0_6"/>
<dbReference type="Proteomes" id="UP000007011">
    <property type="component" value="Chromosome"/>
</dbReference>
<dbReference type="GO" id="GO:0005886">
    <property type="term" value="C:plasma membrane"/>
    <property type="evidence" value="ECO:0007669"/>
    <property type="project" value="UniProtKB-SubCell"/>
</dbReference>
<dbReference type="GO" id="GO:0022900">
    <property type="term" value="P:electron transport chain"/>
    <property type="evidence" value="ECO:0007669"/>
    <property type="project" value="UniProtKB-UniRule"/>
</dbReference>
<dbReference type="HAMAP" id="MF_00478">
    <property type="entry name" value="RsxE_RnfE"/>
    <property type="match status" value="1"/>
</dbReference>
<dbReference type="InterPro" id="IPR003667">
    <property type="entry name" value="NqrDE/RnfAE"/>
</dbReference>
<dbReference type="InterPro" id="IPR010968">
    <property type="entry name" value="RnfE"/>
</dbReference>
<dbReference type="NCBIfam" id="NF009070">
    <property type="entry name" value="PRK12405.1"/>
    <property type="match status" value="1"/>
</dbReference>
<dbReference type="NCBIfam" id="TIGR01948">
    <property type="entry name" value="rnfE"/>
    <property type="match status" value="1"/>
</dbReference>
<dbReference type="PANTHER" id="PTHR30586">
    <property type="entry name" value="ELECTRON TRANSPORT COMPLEX PROTEIN RNFE"/>
    <property type="match status" value="1"/>
</dbReference>
<dbReference type="PANTHER" id="PTHR30586:SF0">
    <property type="entry name" value="ION-TRANSLOCATING OXIDOREDUCTASE COMPLEX SUBUNIT E"/>
    <property type="match status" value="1"/>
</dbReference>
<dbReference type="Pfam" id="PF02508">
    <property type="entry name" value="Rnf-Nqr"/>
    <property type="match status" value="1"/>
</dbReference>
<dbReference type="PIRSF" id="PIRSF006102">
    <property type="entry name" value="NQR_DE"/>
    <property type="match status" value="1"/>
</dbReference>
<proteinExistence type="inferred from homology"/>
<name>RSXE_ECOSM</name>
<sequence length="231" mass="24445">MSEIKDVIVQGLWKNNSALVQLLGLCPLLAVTSTATNALGLGLATTLVLTLTNLTISTLRHWTPAEIRIPIYVMIIASVVSAVQMLINAYAFGLYQSLGIFIPLIVTNCIVVGRAEAFAAKKGPALSALDGFSIGMGATCAMCVLGSLREIIGNGTLFDGADALLGSWAKVLRVEIFHTDSPFLLAMLPPGAFIGLGLMLAGKYLIDERMKKRRTEAAAERALPNGETGNV</sequence>
<reference key="1">
    <citation type="journal article" date="2008" name="J. Bacteriol.">
        <title>Insights into the environmental resistance gene pool from the genome sequence of the multidrug-resistant environmental isolate Escherichia coli SMS-3-5.</title>
        <authorList>
            <person name="Fricke W.F."/>
            <person name="Wright M.S."/>
            <person name="Lindell A.H."/>
            <person name="Harkins D.M."/>
            <person name="Baker-Austin C."/>
            <person name="Ravel J."/>
            <person name="Stepanauskas R."/>
        </authorList>
    </citation>
    <scope>NUCLEOTIDE SEQUENCE [LARGE SCALE GENOMIC DNA]</scope>
    <source>
        <strain>SMS-3-5 / SECEC</strain>
    </source>
</reference>
<organism>
    <name type="scientific">Escherichia coli (strain SMS-3-5 / SECEC)</name>
    <dbReference type="NCBI Taxonomy" id="439855"/>
    <lineage>
        <taxon>Bacteria</taxon>
        <taxon>Pseudomonadati</taxon>
        <taxon>Pseudomonadota</taxon>
        <taxon>Gammaproteobacteria</taxon>
        <taxon>Enterobacterales</taxon>
        <taxon>Enterobacteriaceae</taxon>
        <taxon>Escherichia</taxon>
    </lineage>
</organism>
<accession>B1LEQ4</accession>
<gene>
    <name evidence="1" type="primary">rsxE</name>
    <name type="synonym">rnfE</name>
    <name type="ordered locus">EcSMS35_1567</name>
</gene>